<accession>P0A8N8</accession>
<accession>P03812</accession>
<accession>P78141</accession>
<accession>Q8XDP9</accession>
<reference key="1">
    <citation type="journal article" date="2002" name="Proc. Natl. Acad. Sci. U.S.A.">
        <title>Extensive mosaic structure revealed by the complete genome sequence of uropathogenic Escherichia coli.</title>
        <authorList>
            <person name="Welch R.A."/>
            <person name="Burland V."/>
            <person name="Plunkett G. III"/>
            <person name="Redford P."/>
            <person name="Roesch P."/>
            <person name="Rasko D."/>
            <person name="Buckles E.L."/>
            <person name="Liou S.-R."/>
            <person name="Boutin A."/>
            <person name="Hackett J."/>
            <person name="Stroud D."/>
            <person name="Mayhew G.F."/>
            <person name="Rose D.J."/>
            <person name="Zhou S."/>
            <person name="Schwartz D.C."/>
            <person name="Perna N.T."/>
            <person name="Mobley H.L.T."/>
            <person name="Donnenberg M.S."/>
            <person name="Blattner F.R."/>
        </authorList>
    </citation>
    <scope>NUCLEOTIDE SEQUENCE [LARGE SCALE GENOMIC DNA]</scope>
    <source>
        <strain>CFT073 / ATCC 700928 / UPEC</strain>
    </source>
</reference>
<proteinExistence type="inferred from homology"/>
<name>EPMA_ECOL6</name>
<evidence type="ECO:0000255" key="1">
    <source>
        <dbReference type="HAMAP-Rule" id="MF_00174"/>
    </source>
</evidence>
<evidence type="ECO:0000305" key="2"/>
<comment type="function">
    <text evidence="1">With EpmB is involved in the beta-lysylation step of the post-translational modification of translation elongation factor P (EF-P) on 'Lys-34'. Catalyzes the ATP-dependent activation of (R)-beta-lysine produced by EpmB, forming a lysyl-adenylate, from which the beta-lysyl moiety is then transferred to the epsilon-amino group of EF-P 'Lys-34'.</text>
</comment>
<comment type="catalytic activity">
    <reaction evidence="1">
        <text>D-beta-lysine + L-lysyl-[protein] + ATP = N(6)-((3R)-3,6-diaminohexanoyl)-L-lysyl-[protein] + AMP + diphosphate + H(+)</text>
        <dbReference type="Rhea" id="RHEA:83435"/>
        <dbReference type="Rhea" id="RHEA-COMP:9752"/>
        <dbReference type="Rhea" id="RHEA-COMP:20131"/>
        <dbReference type="ChEBI" id="CHEBI:15378"/>
        <dbReference type="ChEBI" id="CHEBI:29969"/>
        <dbReference type="ChEBI" id="CHEBI:30616"/>
        <dbReference type="ChEBI" id="CHEBI:33019"/>
        <dbReference type="ChEBI" id="CHEBI:84138"/>
        <dbReference type="ChEBI" id="CHEBI:156053"/>
        <dbReference type="ChEBI" id="CHEBI:456215"/>
    </reaction>
    <physiologicalReaction direction="left-to-right" evidence="1">
        <dbReference type="Rhea" id="RHEA:83436"/>
    </physiologicalReaction>
</comment>
<comment type="subunit">
    <text evidence="1">Homodimer.</text>
</comment>
<comment type="similarity">
    <text evidence="1">Belongs to the class-II aminoacyl-tRNA synthetase family. EpmA subfamily.</text>
</comment>
<comment type="sequence caution" evidence="2">
    <conflict type="erroneous initiation">
        <sequence resource="EMBL-CDS" id="AAN83665"/>
    </conflict>
    <text>Extended N-terminus.</text>
</comment>
<organism>
    <name type="scientific">Escherichia coli O6:H1 (strain CFT073 / ATCC 700928 / UPEC)</name>
    <dbReference type="NCBI Taxonomy" id="199310"/>
    <lineage>
        <taxon>Bacteria</taxon>
        <taxon>Pseudomonadati</taxon>
        <taxon>Pseudomonadota</taxon>
        <taxon>Gammaproteobacteria</taxon>
        <taxon>Enterobacterales</taxon>
        <taxon>Enterobacteriaceae</taxon>
        <taxon>Escherichia</taxon>
    </lineage>
</organism>
<protein>
    <recommendedName>
        <fullName evidence="1">Elongation factor P--(R)-beta-lysine ligase</fullName>
        <shortName evidence="1">EF-P--(R)-beta-lysine ligase</shortName>
        <ecNumber evidence="1">6.3.2.-</ecNumber>
    </recommendedName>
    <alternativeName>
        <fullName evidence="1">EF-P post-translational modification enzyme A</fullName>
    </alternativeName>
    <alternativeName>
        <fullName evidence="1">EF-P-lysine lysyltransferase</fullName>
    </alternativeName>
</protein>
<gene>
    <name evidence="1" type="primary">epmA</name>
    <name type="synonym">yjeA</name>
    <name type="ordered locus">c5243</name>
</gene>
<keyword id="KW-0067">ATP-binding</keyword>
<keyword id="KW-0436">Ligase</keyword>
<keyword id="KW-0547">Nucleotide-binding</keyword>
<keyword id="KW-1185">Reference proteome</keyword>
<sequence length="325" mass="36976">MSETASWQPSASIPNLLKRAAIMAEIRRFFADRGVLEVETPCMSQATVTDIHLVPFETRFVGPGHSQGMNLWLMTSPEYHMKRLLVAGCGPVFQLCRSFRNEEMGRYHNPEFTMLEWYRPHYDMYRLMNEVDDLLQQVLDCPAAESLSYQQAFLRYLEIDPLSADKTQLREVAAKLDLSNVADTEEDRDTLLQLLFTFGVEPNIGKEKPTFVYHFPASQASLAQISTEDHRVAERFEVYYKGIELANGFHELTDAREQQQRFEQDNRKRAARGLPQHPIDQNLIEALKVGMPDCSGVALGVDRLVMLALGAETLAEVIAFSVDRA</sequence>
<dbReference type="EC" id="6.3.2.-" evidence="1"/>
<dbReference type="EMBL" id="AE014075">
    <property type="protein sequence ID" value="AAN83665.1"/>
    <property type="status" value="ALT_INIT"/>
    <property type="molecule type" value="Genomic_DNA"/>
</dbReference>
<dbReference type="RefSeq" id="WP_000004771.1">
    <property type="nucleotide sequence ID" value="NZ_CP051263.1"/>
</dbReference>
<dbReference type="SMR" id="P0A8N8"/>
<dbReference type="STRING" id="199310.c5243"/>
<dbReference type="DNASU" id="1037506"/>
<dbReference type="GeneID" id="93777667"/>
<dbReference type="KEGG" id="ecc:c5243"/>
<dbReference type="eggNOG" id="COG2269">
    <property type="taxonomic scope" value="Bacteria"/>
</dbReference>
<dbReference type="HOGENOM" id="CLU_008255_1_1_6"/>
<dbReference type="Proteomes" id="UP000001410">
    <property type="component" value="Chromosome"/>
</dbReference>
<dbReference type="GO" id="GO:0005829">
    <property type="term" value="C:cytosol"/>
    <property type="evidence" value="ECO:0007669"/>
    <property type="project" value="TreeGrafter"/>
</dbReference>
<dbReference type="GO" id="GO:0016880">
    <property type="term" value="F:acid-ammonia (or amide) ligase activity"/>
    <property type="evidence" value="ECO:0007669"/>
    <property type="project" value="UniProtKB-UniRule"/>
</dbReference>
<dbReference type="GO" id="GO:0005524">
    <property type="term" value="F:ATP binding"/>
    <property type="evidence" value="ECO:0007669"/>
    <property type="project" value="UniProtKB-UniRule"/>
</dbReference>
<dbReference type="GO" id="GO:0004824">
    <property type="term" value="F:lysine-tRNA ligase activity"/>
    <property type="evidence" value="ECO:0007669"/>
    <property type="project" value="InterPro"/>
</dbReference>
<dbReference type="GO" id="GO:0000049">
    <property type="term" value="F:tRNA binding"/>
    <property type="evidence" value="ECO:0007669"/>
    <property type="project" value="TreeGrafter"/>
</dbReference>
<dbReference type="GO" id="GO:0006430">
    <property type="term" value="P:lysyl-tRNA aminoacylation"/>
    <property type="evidence" value="ECO:0007669"/>
    <property type="project" value="InterPro"/>
</dbReference>
<dbReference type="FunFam" id="3.30.930.10:FF:000017">
    <property type="entry name" value="Elongation factor P--(R)-beta-lysine ligase"/>
    <property type="match status" value="1"/>
</dbReference>
<dbReference type="Gene3D" id="3.30.930.10">
    <property type="entry name" value="Bira Bifunctional Protein, Domain 2"/>
    <property type="match status" value="1"/>
</dbReference>
<dbReference type="HAMAP" id="MF_00174">
    <property type="entry name" value="EF_P_modif_A"/>
    <property type="match status" value="1"/>
</dbReference>
<dbReference type="InterPro" id="IPR004364">
    <property type="entry name" value="Aa-tRNA-synt_II"/>
</dbReference>
<dbReference type="InterPro" id="IPR006195">
    <property type="entry name" value="aa-tRNA-synth_II"/>
</dbReference>
<dbReference type="InterPro" id="IPR045864">
    <property type="entry name" value="aa-tRNA-synth_II/BPL/LPL"/>
</dbReference>
<dbReference type="InterPro" id="IPR004525">
    <property type="entry name" value="EpmA"/>
</dbReference>
<dbReference type="InterPro" id="IPR018149">
    <property type="entry name" value="Lys-tRNA-synth_II_C"/>
</dbReference>
<dbReference type="NCBIfam" id="TIGR00462">
    <property type="entry name" value="genX"/>
    <property type="match status" value="1"/>
</dbReference>
<dbReference type="NCBIfam" id="NF006828">
    <property type="entry name" value="PRK09350.1"/>
    <property type="match status" value="1"/>
</dbReference>
<dbReference type="PANTHER" id="PTHR42918:SF6">
    <property type="entry name" value="ELONGATION FACTOR P--(R)-BETA-LYSINE LIGASE"/>
    <property type="match status" value="1"/>
</dbReference>
<dbReference type="PANTHER" id="PTHR42918">
    <property type="entry name" value="LYSYL-TRNA SYNTHETASE"/>
    <property type="match status" value="1"/>
</dbReference>
<dbReference type="Pfam" id="PF00152">
    <property type="entry name" value="tRNA-synt_2"/>
    <property type="match status" value="1"/>
</dbReference>
<dbReference type="PRINTS" id="PR00982">
    <property type="entry name" value="TRNASYNTHLYS"/>
</dbReference>
<dbReference type="SUPFAM" id="SSF55681">
    <property type="entry name" value="Class II aaRS and biotin synthetases"/>
    <property type="match status" value="1"/>
</dbReference>
<dbReference type="PROSITE" id="PS50862">
    <property type="entry name" value="AA_TRNA_LIGASE_II"/>
    <property type="match status" value="1"/>
</dbReference>
<feature type="chain" id="PRO_0000152720" description="Elongation factor P--(R)-beta-lysine ligase">
    <location>
        <begin position="1"/>
        <end position="325"/>
    </location>
</feature>
<feature type="binding site" evidence="1">
    <location>
        <begin position="76"/>
        <end position="78"/>
    </location>
    <ligand>
        <name>substrate</name>
    </ligand>
</feature>
<feature type="binding site" evidence="1">
    <location>
        <begin position="100"/>
        <end position="102"/>
    </location>
    <ligand>
        <name>ATP</name>
        <dbReference type="ChEBI" id="CHEBI:30616"/>
    </ligand>
</feature>
<feature type="binding site" evidence="1">
    <location>
        <position position="109"/>
    </location>
    <ligand>
        <name>ATP</name>
        <dbReference type="ChEBI" id="CHEBI:30616"/>
    </ligand>
</feature>
<feature type="binding site" evidence="1">
    <location>
        <position position="118"/>
    </location>
    <ligand>
        <name>substrate</name>
    </ligand>
</feature>
<feature type="binding site" evidence="1">
    <location>
        <begin position="244"/>
        <end position="245"/>
    </location>
    <ligand>
        <name>ATP</name>
        <dbReference type="ChEBI" id="CHEBI:30616"/>
    </ligand>
</feature>
<feature type="binding site" evidence="1">
    <location>
        <position position="251"/>
    </location>
    <ligand>
        <name>substrate</name>
    </ligand>
</feature>
<feature type="binding site" evidence="1">
    <location>
        <position position="300"/>
    </location>
    <ligand>
        <name>ATP</name>
        <dbReference type="ChEBI" id="CHEBI:30616"/>
    </ligand>
</feature>